<sequence>MTKSELIERLATQQSHIPAKTVEDAVKEMLEHMASTLAQGERIEIRGFGSFSLHYRAPRTGRNPKTGDKVELEGKYVPHFKPGKELRDRANIYG</sequence>
<accession>P0A6Y2</accession>
<accession>P08756</accession>
<keyword id="KW-0233">DNA recombination</keyword>
<keyword id="KW-0238">DNA-binding</keyword>
<keyword id="KW-1185">Reference proteome</keyword>
<keyword id="KW-0804">Transcription</keyword>
<keyword id="KW-0805">Transcription regulation</keyword>
<keyword id="KW-0810">Translation regulation</keyword>
<feature type="chain" id="PRO_0000105049" description="Integration host factor subunit beta">
    <location>
        <begin position="1"/>
        <end position="94"/>
    </location>
</feature>
<name>IHFB_ECOL6</name>
<evidence type="ECO:0000250" key="1"/>
<evidence type="ECO:0000305" key="2"/>
<organism>
    <name type="scientific">Escherichia coli O6:H1 (strain CFT073 / ATCC 700928 / UPEC)</name>
    <dbReference type="NCBI Taxonomy" id="199310"/>
    <lineage>
        <taxon>Bacteria</taxon>
        <taxon>Pseudomonadati</taxon>
        <taxon>Pseudomonadota</taxon>
        <taxon>Gammaproteobacteria</taxon>
        <taxon>Enterobacterales</taxon>
        <taxon>Enterobacteriaceae</taxon>
        <taxon>Escherichia</taxon>
    </lineage>
</organism>
<comment type="function">
    <text evidence="1">This protein is one of the two subunits of integration host factor, a specific DNA-binding protein that functions in genetic recombination as well as in transcriptional and translational control.</text>
</comment>
<comment type="subunit">
    <text evidence="1">Heterodimer of an alpha and a beta chain.</text>
</comment>
<comment type="similarity">
    <text evidence="2">Belongs to the bacterial histone-like protein family.</text>
</comment>
<proteinExistence type="inferred from homology"/>
<gene>
    <name type="primary">ihfB</name>
    <name type="synonym">himD</name>
    <name type="ordered locus">c1050</name>
</gene>
<reference key="1">
    <citation type="journal article" date="2002" name="Proc. Natl. Acad. Sci. U.S.A.">
        <title>Extensive mosaic structure revealed by the complete genome sequence of uropathogenic Escherichia coli.</title>
        <authorList>
            <person name="Welch R.A."/>
            <person name="Burland V."/>
            <person name="Plunkett G. III"/>
            <person name="Redford P."/>
            <person name="Roesch P."/>
            <person name="Rasko D."/>
            <person name="Buckles E.L."/>
            <person name="Liou S.-R."/>
            <person name="Boutin A."/>
            <person name="Hackett J."/>
            <person name="Stroud D."/>
            <person name="Mayhew G.F."/>
            <person name="Rose D.J."/>
            <person name="Zhou S."/>
            <person name="Schwartz D.C."/>
            <person name="Perna N.T."/>
            <person name="Mobley H.L.T."/>
            <person name="Donnenberg M.S."/>
            <person name="Blattner F.R."/>
        </authorList>
    </citation>
    <scope>NUCLEOTIDE SEQUENCE [LARGE SCALE GENOMIC DNA]</scope>
    <source>
        <strain>CFT073 / ATCC 700928 / UPEC</strain>
    </source>
</reference>
<dbReference type="EMBL" id="AE014075">
    <property type="protein sequence ID" value="AAN79520.1"/>
    <property type="molecule type" value="Genomic_DNA"/>
</dbReference>
<dbReference type="RefSeq" id="WP_000167336.1">
    <property type="nucleotide sequence ID" value="NZ_CP051263.1"/>
</dbReference>
<dbReference type="SMR" id="P0A6Y2"/>
<dbReference type="STRING" id="199310.c1050"/>
<dbReference type="GeneID" id="93776505"/>
<dbReference type="KEGG" id="ecc:c1050"/>
<dbReference type="eggNOG" id="COG0776">
    <property type="taxonomic scope" value="Bacteria"/>
</dbReference>
<dbReference type="HOGENOM" id="CLU_105066_2_0_6"/>
<dbReference type="BioCyc" id="ECOL199310:C1050-MONOMER"/>
<dbReference type="Proteomes" id="UP000001410">
    <property type="component" value="Chromosome"/>
</dbReference>
<dbReference type="GO" id="GO:0005694">
    <property type="term" value="C:chromosome"/>
    <property type="evidence" value="ECO:0007669"/>
    <property type="project" value="InterPro"/>
</dbReference>
<dbReference type="GO" id="GO:0005829">
    <property type="term" value="C:cytosol"/>
    <property type="evidence" value="ECO:0007669"/>
    <property type="project" value="TreeGrafter"/>
</dbReference>
<dbReference type="GO" id="GO:0003677">
    <property type="term" value="F:DNA binding"/>
    <property type="evidence" value="ECO:0007669"/>
    <property type="project" value="UniProtKB-UniRule"/>
</dbReference>
<dbReference type="GO" id="GO:0030527">
    <property type="term" value="F:structural constituent of chromatin"/>
    <property type="evidence" value="ECO:0007669"/>
    <property type="project" value="InterPro"/>
</dbReference>
<dbReference type="GO" id="GO:0006310">
    <property type="term" value="P:DNA recombination"/>
    <property type="evidence" value="ECO:0007669"/>
    <property type="project" value="UniProtKB-UniRule"/>
</dbReference>
<dbReference type="GO" id="GO:0006355">
    <property type="term" value="P:regulation of DNA-templated transcription"/>
    <property type="evidence" value="ECO:0007669"/>
    <property type="project" value="UniProtKB-UniRule"/>
</dbReference>
<dbReference type="GO" id="GO:0006417">
    <property type="term" value="P:regulation of translation"/>
    <property type="evidence" value="ECO:0007669"/>
    <property type="project" value="UniProtKB-UniRule"/>
</dbReference>
<dbReference type="CDD" id="cd13836">
    <property type="entry name" value="IHF_B"/>
    <property type="match status" value="1"/>
</dbReference>
<dbReference type="FunFam" id="4.10.520.10:FF:000003">
    <property type="entry name" value="Integration host factor subunit beta"/>
    <property type="match status" value="1"/>
</dbReference>
<dbReference type="Gene3D" id="4.10.520.10">
    <property type="entry name" value="IHF-like DNA-binding proteins"/>
    <property type="match status" value="1"/>
</dbReference>
<dbReference type="HAMAP" id="MF_00381">
    <property type="entry name" value="IHF_beta"/>
    <property type="match status" value="1"/>
</dbReference>
<dbReference type="InterPro" id="IPR000119">
    <property type="entry name" value="Hist_DNA-bd"/>
</dbReference>
<dbReference type="InterPro" id="IPR020816">
    <property type="entry name" value="Histone-like_DNA-bd_CS"/>
</dbReference>
<dbReference type="InterPro" id="IPR010992">
    <property type="entry name" value="IHF-like_DNA-bd_dom_sf"/>
</dbReference>
<dbReference type="InterPro" id="IPR005685">
    <property type="entry name" value="IHF_beta"/>
</dbReference>
<dbReference type="NCBIfam" id="TIGR00988">
    <property type="entry name" value="hip"/>
    <property type="match status" value="1"/>
</dbReference>
<dbReference type="NCBIfam" id="NF001222">
    <property type="entry name" value="PRK00199.1"/>
    <property type="match status" value="1"/>
</dbReference>
<dbReference type="PANTHER" id="PTHR33175">
    <property type="entry name" value="DNA-BINDING PROTEIN HU"/>
    <property type="match status" value="1"/>
</dbReference>
<dbReference type="PANTHER" id="PTHR33175:SF5">
    <property type="entry name" value="INTEGRATION HOST FACTOR SUBUNIT BETA"/>
    <property type="match status" value="1"/>
</dbReference>
<dbReference type="Pfam" id="PF00216">
    <property type="entry name" value="Bac_DNA_binding"/>
    <property type="match status" value="1"/>
</dbReference>
<dbReference type="PRINTS" id="PR01727">
    <property type="entry name" value="DNABINDINGHU"/>
</dbReference>
<dbReference type="SMART" id="SM00411">
    <property type="entry name" value="BHL"/>
    <property type="match status" value="1"/>
</dbReference>
<dbReference type="SUPFAM" id="SSF47729">
    <property type="entry name" value="IHF-like DNA-binding proteins"/>
    <property type="match status" value="1"/>
</dbReference>
<dbReference type="PROSITE" id="PS00045">
    <property type="entry name" value="HISTONE_LIKE"/>
    <property type="match status" value="1"/>
</dbReference>
<protein>
    <recommendedName>
        <fullName>Integration host factor subunit beta</fullName>
        <shortName>IHF-beta</shortName>
    </recommendedName>
</protein>